<proteinExistence type="inferred from homology"/>
<name>TYSY_LACLA</name>
<protein>
    <recommendedName>
        <fullName evidence="1">Thymidylate synthase</fullName>
        <shortName evidence="1">TS</shortName>
        <shortName evidence="1">TSase</shortName>
        <ecNumber evidence="1">2.1.1.45</ecNumber>
    </recommendedName>
</protein>
<feature type="chain" id="PRO_0000140969" description="Thymidylate synthase">
    <location>
        <begin position="1"/>
        <end position="279"/>
    </location>
</feature>
<feature type="active site" description="Nucleophile" evidence="1">
    <location>
        <position position="153"/>
    </location>
</feature>
<feature type="binding site" evidence="1">
    <location>
        <begin position="132"/>
        <end position="133"/>
    </location>
    <ligand>
        <name>dUMP</name>
        <dbReference type="ChEBI" id="CHEBI:246422"/>
        <note>ligand shared between dimeric partners</note>
    </ligand>
</feature>
<feature type="binding site" description="in other chain" evidence="1">
    <location>
        <begin position="178"/>
        <end position="181"/>
    </location>
    <ligand>
        <name>dUMP</name>
        <dbReference type="ChEBI" id="CHEBI:246422"/>
        <note>ligand shared between dimeric partners</note>
    </ligand>
</feature>
<feature type="binding site" evidence="1">
    <location>
        <position position="181"/>
    </location>
    <ligand>
        <name>(6R)-5,10-methylene-5,6,7,8-tetrahydrofolate</name>
        <dbReference type="ChEBI" id="CHEBI:15636"/>
    </ligand>
</feature>
<feature type="binding site" description="in other chain" evidence="1">
    <location>
        <position position="189"/>
    </location>
    <ligand>
        <name>dUMP</name>
        <dbReference type="ChEBI" id="CHEBI:246422"/>
        <note>ligand shared between dimeric partners</note>
    </ligand>
</feature>
<feature type="binding site" description="in other chain" evidence="1">
    <location>
        <begin position="219"/>
        <end position="221"/>
    </location>
    <ligand>
        <name>dUMP</name>
        <dbReference type="ChEBI" id="CHEBI:246422"/>
        <note>ligand shared between dimeric partners</note>
    </ligand>
</feature>
<feature type="binding site" evidence="1">
    <location>
        <position position="278"/>
    </location>
    <ligand>
        <name>(6R)-5,10-methylene-5,6,7,8-tetrahydrofolate</name>
        <dbReference type="ChEBI" id="CHEBI:15636"/>
    </ligand>
</feature>
<feature type="sequence conflict" description="In Ref. 1; AAA25221." evidence="2" ref="1">
    <original>KI</original>
    <variation>QV</variation>
    <location>
        <begin position="6"/>
        <end position="7"/>
    </location>
</feature>
<feature type="sequence conflict" description="In Ref. 1; AAA25221." evidence="2" ref="1">
    <original>T</original>
    <variation>M</variation>
    <location>
        <position position="34"/>
    </location>
</feature>
<feature type="sequence conflict" description="In Ref. 1; AAA25221." evidence="2" ref="1">
    <original>AI</original>
    <variation>SV</variation>
    <location>
        <begin position="83"/>
        <end position="84"/>
    </location>
</feature>
<feature type="sequence conflict" description="In Ref. 1; AAA25221." evidence="2" ref="1">
    <original>D</original>
    <variation>E</variation>
    <location>
        <position position="123"/>
    </location>
</feature>
<feature type="sequence conflict" description="In Ref. 1; AAA25221." evidence="2" ref="1">
    <original>Q</original>
    <variation>K</variation>
    <location>
        <position position="165"/>
    </location>
</feature>
<feature type="sequence conflict" description="In Ref. 1; AAA25221." evidence="2" ref="1">
    <original>V</original>
    <variation>M</variation>
    <location>
        <position position="232"/>
    </location>
</feature>
<feature type="sequence conflict" description="In Ref. 1; AAA25221." evidence="2" ref="1">
    <original>D</original>
    <variation>E</variation>
    <location>
        <position position="238"/>
    </location>
</feature>
<reference key="1">
    <citation type="journal article" date="1990" name="Appl. Environ. Microbiol.">
        <title>Cloning and characterization of the thymidylate synthase gene from Lactococcus lactis subsp. lactis.</title>
        <authorList>
            <person name="Ross P."/>
            <person name="O'Gara F."/>
            <person name="Condon S."/>
        </authorList>
    </citation>
    <scope>NUCLEOTIDE SEQUENCE [GENOMIC DNA]</scope>
    <source>
        <strain>712</strain>
    </source>
</reference>
<reference key="2">
    <citation type="journal article" date="2001" name="Genome Res.">
        <title>The complete genome sequence of the lactic acid bacterium Lactococcus lactis ssp. lactis IL1403.</title>
        <authorList>
            <person name="Bolotin A."/>
            <person name="Wincker P."/>
            <person name="Mauger S."/>
            <person name="Jaillon O."/>
            <person name="Malarme K."/>
            <person name="Weissenbach J."/>
            <person name="Ehrlich S.D."/>
            <person name="Sorokin A."/>
        </authorList>
    </citation>
    <scope>NUCLEOTIDE SEQUENCE [LARGE SCALE GENOMIC DNA]</scope>
    <source>
        <strain>IL1403</strain>
    </source>
</reference>
<organism>
    <name type="scientific">Lactococcus lactis subsp. lactis (strain IL1403)</name>
    <name type="common">Streptococcus lactis</name>
    <dbReference type="NCBI Taxonomy" id="272623"/>
    <lineage>
        <taxon>Bacteria</taxon>
        <taxon>Bacillati</taxon>
        <taxon>Bacillota</taxon>
        <taxon>Bacilli</taxon>
        <taxon>Lactobacillales</taxon>
        <taxon>Streptococcaceae</taxon>
        <taxon>Lactococcus</taxon>
    </lineage>
</organism>
<evidence type="ECO:0000255" key="1">
    <source>
        <dbReference type="HAMAP-Rule" id="MF_00008"/>
    </source>
</evidence>
<evidence type="ECO:0000305" key="2"/>
<sequence>MTYADKIFKQNIQNILDNGVFSENARPKYKDGQTANSKYVTGSFVTYDLQKGEFPITTLRPIPIKSAIKELMWIYQDQTSELAILEEKYGVKYWGEWGIGDGTIGQRYGATVKKYNIIGKLLDGLAKNPWNRRNIINLWQYEDFEETEGLLPCAFQTMFDVRREQDGQIYLDATLIQRSNDMLVAHHINAMQYVALQMMIAKHFSWKVGKFFYFVNNLHIYDNQFEQANELVKRTASDKEPRLVLNVPDGTNFFDIKPEDFELVDYEPVKPQLKFDLAI</sequence>
<gene>
    <name evidence="1" type="primary">thyA</name>
    <name type="ordered locus">LL1541</name>
    <name type="ORF">L182559</name>
</gene>
<dbReference type="EC" id="2.1.1.45" evidence="1"/>
<dbReference type="EMBL" id="M33770">
    <property type="protein sequence ID" value="AAA25221.1"/>
    <property type="molecule type" value="Genomic_DNA"/>
</dbReference>
<dbReference type="EMBL" id="AE005176">
    <property type="protein sequence ID" value="AAK05639.1"/>
    <property type="molecule type" value="Genomic_DNA"/>
</dbReference>
<dbReference type="PIR" id="A43797">
    <property type="entry name" value="A43797"/>
</dbReference>
<dbReference type="PIR" id="E86817">
    <property type="entry name" value="E86817"/>
</dbReference>
<dbReference type="RefSeq" id="NP_267697.1">
    <property type="nucleotide sequence ID" value="NC_002662.1"/>
</dbReference>
<dbReference type="RefSeq" id="WP_003130015.1">
    <property type="nucleotide sequence ID" value="NC_002662.1"/>
</dbReference>
<dbReference type="SMR" id="P19368"/>
<dbReference type="PaxDb" id="272623-L182559"/>
<dbReference type="EnsemblBacteria" id="AAK05639">
    <property type="protein sequence ID" value="AAK05639"/>
    <property type="gene ID" value="L182559"/>
</dbReference>
<dbReference type="KEGG" id="lla:L182559"/>
<dbReference type="PATRIC" id="fig|272623.7.peg.1652"/>
<dbReference type="eggNOG" id="COG0207">
    <property type="taxonomic scope" value="Bacteria"/>
</dbReference>
<dbReference type="HOGENOM" id="CLU_021669_0_0_9"/>
<dbReference type="OrthoDB" id="9774633at2"/>
<dbReference type="UniPathway" id="UPA00575"/>
<dbReference type="Proteomes" id="UP000002196">
    <property type="component" value="Chromosome"/>
</dbReference>
<dbReference type="GO" id="GO:0005829">
    <property type="term" value="C:cytosol"/>
    <property type="evidence" value="ECO:0007669"/>
    <property type="project" value="TreeGrafter"/>
</dbReference>
<dbReference type="GO" id="GO:0004799">
    <property type="term" value="F:thymidylate synthase activity"/>
    <property type="evidence" value="ECO:0007669"/>
    <property type="project" value="UniProtKB-UniRule"/>
</dbReference>
<dbReference type="GO" id="GO:0006231">
    <property type="term" value="P:dTMP biosynthetic process"/>
    <property type="evidence" value="ECO:0007669"/>
    <property type="project" value="UniProtKB-UniRule"/>
</dbReference>
<dbReference type="GO" id="GO:0006235">
    <property type="term" value="P:dTTP biosynthetic process"/>
    <property type="evidence" value="ECO:0007669"/>
    <property type="project" value="UniProtKB-UniRule"/>
</dbReference>
<dbReference type="GO" id="GO:0032259">
    <property type="term" value="P:methylation"/>
    <property type="evidence" value="ECO:0007669"/>
    <property type="project" value="UniProtKB-KW"/>
</dbReference>
<dbReference type="CDD" id="cd00351">
    <property type="entry name" value="TS_Pyrimidine_HMase"/>
    <property type="match status" value="1"/>
</dbReference>
<dbReference type="Gene3D" id="3.30.572.10">
    <property type="entry name" value="Thymidylate synthase/dCMP hydroxymethylase domain"/>
    <property type="match status" value="1"/>
</dbReference>
<dbReference type="HAMAP" id="MF_00008">
    <property type="entry name" value="Thymidy_synth_bact"/>
    <property type="match status" value="1"/>
</dbReference>
<dbReference type="InterPro" id="IPR045097">
    <property type="entry name" value="Thymidate_synth/dCMP_Mease"/>
</dbReference>
<dbReference type="InterPro" id="IPR023451">
    <property type="entry name" value="Thymidate_synth/dCMP_Mease_dom"/>
</dbReference>
<dbReference type="InterPro" id="IPR036926">
    <property type="entry name" value="Thymidate_synth/dCMP_Mease_sf"/>
</dbReference>
<dbReference type="InterPro" id="IPR000398">
    <property type="entry name" value="Thymidylate_synthase"/>
</dbReference>
<dbReference type="InterPro" id="IPR020940">
    <property type="entry name" value="Thymidylate_synthase_AS"/>
</dbReference>
<dbReference type="NCBIfam" id="NF002495">
    <property type="entry name" value="PRK01827.1-1"/>
    <property type="match status" value="1"/>
</dbReference>
<dbReference type="PANTHER" id="PTHR11548">
    <property type="entry name" value="THYMIDYLATE SYNTHASE 1"/>
    <property type="match status" value="1"/>
</dbReference>
<dbReference type="PANTHER" id="PTHR11548:SF1">
    <property type="entry name" value="THYMIDYLATE SYNTHASE 1"/>
    <property type="match status" value="1"/>
</dbReference>
<dbReference type="Pfam" id="PF00303">
    <property type="entry name" value="Thymidylat_synt"/>
    <property type="match status" value="1"/>
</dbReference>
<dbReference type="PRINTS" id="PR00108">
    <property type="entry name" value="THYMDSNTHASE"/>
</dbReference>
<dbReference type="SUPFAM" id="SSF55831">
    <property type="entry name" value="Thymidylate synthase/dCMP hydroxymethylase"/>
    <property type="match status" value="1"/>
</dbReference>
<dbReference type="PROSITE" id="PS00091">
    <property type="entry name" value="THYMIDYLATE_SYNTHASE"/>
    <property type="match status" value="1"/>
</dbReference>
<comment type="function">
    <text evidence="1">Catalyzes the reductive methylation of 2'-deoxyuridine-5'-monophosphate (dUMP) to 2'-deoxythymidine-5'-monophosphate (dTMP) while utilizing 5,10-methylenetetrahydrofolate (mTHF) as the methyl donor and reductant in the reaction, yielding dihydrofolate (DHF) as a by-product. This enzymatic reaction provides an intracellular de novo source of dTMP, an essential precursor for DNA biosynthesis.</text>
</comment>
<comment type="catalytic activity">
    <reaction evidence="1">
        <text>dUMP + (6R)-5,10-methylene-5,6,7,8-tetrahydrofolate = 7,8-dihydrofolate + dTMP</text>
        <dbReference type="Rhea" id="RHEA:12104"/>
        <dbReference type="ChEBI" id="CHEBI:15636"/>
        <dbReference type="ChEBI" id="CHEBI:57451"/>
        <dbReference type="ChEBI" id="CHEBI:63528"/>
        <dbReference type="ChEBI" id="CHEBI:246422"/>
        <dbReference type="EC" id="2.1.1.45"/>
    </reaction>
</comment>
<comment type="pathway">
    <text evidence="1">Pyrimidine metabolism; dTTP biosynthesis.</text>
</comment>
<comment type="subunit">
    <text evidence="1">Homodimer.</text>
</comment>
<comment type="subcellular location">
    <subcellularLocation>
        <location evidence="1">Cytoplasm</location>
    </subcellularLocation>
</comment>
<comment type="similarity">
    <text evidence="1">Belongs to the thymidylate synthase family. Bacterial-type ThyA subfamily.</text>
</comment>
<keyword id="KW-0963">Cytoplasm</keyword>
<keyword id="KW-0489">Methyltransferase</keyword>
<keyword id="KW-0545">Nucleotide biosynthesis</keyword>
<keyword id="KW-1185">Reference proteome</keyword>
<keyword id="KW-0808">Transferase</keyword>
<accession>P19368</accession>
<accession>Q9CFD8</accession>